<feature type="signal peptide" evidence="1">
    <location>
        <begin position="1"/>
        <end position="22"/>
    </location>
</feature>
<feature type="chain" id="PRO_0000447976" description="Secreted RxLR effector protein 152">
    <location>
        <begin position="23"/>
        <end position="279"/>
    </location>
</feature>
<feature type="short sequence motif" description="RxLR-dEER" evidence="5">
    <location>
        <begin position="47"/>
        <end position="62"/>
    </location>
</feature>
<keyword id="KW-1048">Host nucleus</keyword>
<keyword id="KW-0964">Secreted</keyword>
<keyword id="KW-0732">Signal</keyword>
<keyword id="KW-0843">Virulence</keyword>
<reference key="1">
    <citation type="journal article" date="2018" name="Front. Plant Sci.">
        <title>In planta functional analysis and subcellular localization of the oomycete pathogen Plasmopara viticola candidate RXLR effector repertoire.</title>
        <authorList>
            <person name="Liu Y."/>
            <person name="Lan X."/>
            <person name="Song S."/>
            <person name="Yin L."/>
            <person name="Dry I.B."/>
            <person name="Qu J."/>
            <person name="Xiang J."/>
            <person name="Lu J."/>
        </authorList>
    </citation>
    <scope>NUCLEOTIDE SEQUENCE [MRNA]</scope>
    <scope>DOMAIN</scope>
    <scope>FUNCTION</scope>
    <scope>SUBCELLULAR LOCATION</scope>
</reference>
<comment type="function">
    <text evidence="2">Secreted effector that completely suppresses the host cell death induced by cell death-inducing proteins.</text>
</comment>
<comment type="subcellular location">
    <subcellularLocation>
        <location evidence="2">Secreted</location>
    </subcellularLocation>
    <subcellularLocation>
        <location evidence="2">Host nucleus</location>
    </subcellularLocation>
</comment>
<comment type="domain">
    <text evidence="5">The RxLR-dEER motif acts to carry the protein into the host cell cytoplasm through binding to cell surface phosphatidylinositol-3-phosphate.</text>
</comment>
<comment type="similarity">
    <text evidence="4">Belongs to the RxLR effector family.</text>
</comment>
<proteinExistence type="evidence at transcript level"/>
<name>RL152_PLAVT</name>
<accession>P0CV66</accession>
<sequence>MRNGSVLFGLFFIGHSCSVLLAAPTRASNNFDVESTHAEQWDSNGKRTLQADDSERTLAEERSMTQALLPAAEAFGKTKLPETTVPRASLGSKLNPMTWLKRIWYKLRLWNARFRLAKLKVRTSGENSIDRATLEGLTPLYLKKLKNEIFRYSSSVPRDKVQIEDEYDTFVTKYFRHFDGLFKEKPVTKMGKWDKLVRAMTRTGQLAMRAMLRKVGRTVDKGYSNEKLISLDVSPLLYMRLLVKRGVFTDVEHNKAKIDRLKNYVKAYKEHVMVSQPGG</sequence>
<organism>
    <name type="scientific">Plasmopara viticola</name>
    <name type="common">Downy mildew of grapevine</name>
    <name type="synonym">Botrytis viticola</name>
    <dbReference type="NCBI Taxonomy" id="143451"/>
    <lineage>
        <taxon>Eukaryota</taxon>
        <taxon>Sar</taxon>
        <taxon>Stramenopiles</taxon>
        <taxon>Oomycota</taxon>
        <taxon>Peronosporales</taxon>
        <taxon>Peronosporaceae</taxon>
        <taxon>Plasmopara</taxon>
    </lineage>
</organism>
<protein>
    <recommendedName>
        <fullName evidence="3">Secreted RxLR effector protein 152</fullName>
    </recommendedName>
</protein>
<dbReference type="SMR" id="P0CV66"/>
<dbReference type="GO" id="GO:0005576">
    <property type="term" value="C:extracellular region"/>
    <property type="evidence" value="ECO:0007669"/>
    <property type="project" value="UniProtKB-SubCell"/>
</dbReference>
<dbReference type="GO" id="GO:0042025">
    <property type="term" value="C:host cell nucleus"/>
    <property type="evidence" value="ECO:0007669"/>
    <property type="project" value="UniProtKB-SubCell"/>
</dbReference>
<gene>
    <name evidence="3" type="primary">RXLR152</name>
</gene>
<evidence type="ECO:0000255" key="1"/>
<evidence type="ECO:0000269" key="2">
    <source>
    </source>
</evidence>
<evidence type="ECO:0000303" key="3">
    <source>
    </source>
</evidence>
<evidence type="ECO:0000305" key="4"/>
<evidence type="ECO:0000305" key="5">
    <source>
    </source>
</evidence>